<dbReference type="EC" id="4.1.1.65" evidence="1"/>
<dbReference type="EMBL" id="CP000089">
    <property type="protein sequence ID" value="AAZ47606.1"/>
    <property type="molecule type" value="Genomic_DNA"/>
</dbReference>
<dbReference type="SMR" id="Q47C25"/>
<dbReference type="STRING" id="159087.Daro_2876"/>
<dbReference type="KEGG" id="dar:Daro_2876"/>
<dbReference type="eggNOG" id="COG0688">
    <property type="taxonomic scope" value="Bacteria"/>
</dbReference>
<dbReference type="HOGENOM" id="CLU_029061_4_1_4"/>
<dbReference type="OrthoDB" id="9802030at2"/>
<dbReference type="UniPathway" id="UPA00558">
    <property type="reaction ID" value="UER00616"/>
</dbReference>
<dbReference type="GO" id="GO:0005886">
    <property type="term" value="C:plasma membrane"/>
    <property type="evidence" value="ECO:0007669"/>
    <property type="project" value="UniProtKB-SubCell"/>
</dbReference>
<dbReference type="GO" id="GO:0004609">
    <property type="term" value="F:phosphatidylserine decarboxylase activity"/>
    <property type="evidence" value="ECO:0007669"/>
    <property type="project" value="UniProtKB-UniRule"/>
</dbReference>
<dbReference type="GO" id="GO:0006646">
    <property type="term" value="P:phosphatidylethanolamine biosynthetic process"/>
    <property type="evidence" value="ECO:0007669"/>
    <property type="project" value="UniProtKB-UniRule"/>
</dbReference>
<dbReference type="HAMAP" id="MF_00662">
    <property type="entry name" value="PS_decarb_PSD_B_type1"/>
    <property type="match status" value="1"/>
</dbReference>
<dbReference type="InterPro" id="IPR003817">
    <property type="entry name" value="PS_Dcarbxylase"/>
</dbReference>
<dbReference type="InterPro" id="IPR033177">
    <property type="entry name" value="PSD-B"/>
</dbReference>
<dbReference type="InterPro" id="IPR033178">
    <property type="entry name" value="PSD_type1_pro"/>
</dbReference>
<dbReference type="NCBIfam" id="TIGR00163">
    <property type="entry name" value="PS_decarb"/>
    <property type="match status" value="1"/>
</dbReference>
<dbReference type="PANTHER" id="PTHR10067">
    <property type="entry name" value="PHOSPHATIDYLSERINE DECARBOXYLASE"/>
    <property type="match status" value="1"/>
</dbReference>
<dbReference type="PANTHER" id="PTHR10067:SF6">
    <property type="entry name" value="PHOSPHATIDYLSERINE DECARBOXYLASE PROENZYME, MITOCHONDRIAL"/>
    <property type="match status" value="1"/>
</dbReference>
<dbReference type="Pfam" id="PF02666">
    <property type="entry name" value="PS_Dcarbxylase"/>
    <property type="match status" value="1"/>
</dbReference>
<keyword id="KW-1003">Cell membrane</keyword>
<keyword id="KW-0210">Decarboxylase</keyword>
<keyword id="KW-0444">Lipid biosynthesis</keyword>
<keyword id="KW-0443">Lipid metabolism</keyword>
<keyword id="KW-0456">Lyase</keyword>
<keyword id="KW-0472">Membrane</keyword>
<keyword id="KW-0594">Phospholipid biosynthesis</keyword>
<keyword id="KW-1208">Phospholipid metabolism</keyword>
<keyword id="KW-0670">Pyruvate</keyword>
<keyword id="KW-0865">Zymogen</keyword>
<proteinExistence type="inferred from homology"/>
<protein>
    <recommendedName>
        <fullName evidence="1">Phosphatidylserine decarboxylase proenzyme</fullName>
        <ecNumber evidence="1">4.1.1.65</ecNumber>
    </recommendedName>
    <component>
        <recommendedName>
            <fullName evidence="1">Phosphatidylserine decarboxylase alpha chain</fullName>
        </recommendedName>
    </component>
    <component>
        <recommendedName>
            <fullName evidence="1">Phosphatidylserine decarboxylase beta chain</fullName>
        </recommendedName>
    </component>
</protein>
<feature type="chain" id="PRO_0000262103" description="Phosphatidylserine decarboxylase beta chain" evidence="1">
    <location>
        <begin position="1"/>
        <end position="247"/>
    </location>
</feature>
<feature type="chain" id="PRO_0000262104" description="Phosphatidylserine decarboxylase alpha chain" evidence="1">
    <location>
        <begin position="248"/>
        <end position="282"/>
    </location>
</feature>
<feature type="active site" description="Charge relay system; for autoendoproteolytic cleavage activity" evidence="1">
    <location>
        <position position="88"/>
    </location>
</feature>
<feature type="active site" description="Charge relay system; for autoendoproteolytic cleavage activity" evidence="1">
    <location>
        <position position="145"/>
    </location>
</feature>
<feature type="active site" description="Charge relay system; for autoendoproteolytic cleavage activity" evidence="1">
    <location>
        <position position="248"/>
    </location>
</feature>
<feature type="active site" description="Schiff-base intermediate with substrate; via pyruvic acid; for decarboxylase activity" evidence="1">
    <location>
        <position position="248"/>
    </location>
</feature>
<feature type="site" description="Cleavage (non-hydrolytic); by autocatalysis" evidence="1">
    <location>
        <begin position="247"/>
        <end position="248"/>
    </location>
</feature>
<feature type="modified residue" description="Pyruvic acid (Ser); by autocatalysis" evidence="1">
    <location>
        <position position="248"/>
    </location>
</feature>
<accession>Q47C25</accession>
<evidence type="ECO:0000255" key="1">
    <source>
        <dbReference type="HAMAP-Rule" id="MF_00662"/>
    </source>
</evidence>
<name>PSD_DECAR</name>
<comment type="function">
    <text evidence="1">Catalyzes the formation of phosphatidylethanolamine (PtdEtn) from phosphatidylserine (PtdSer).</text>
</comment>
<comment type="catalytic activity">
    <reaction evidence="1">
        <text>a 1,2-diacyl-sn-glycero-3-phospho-L-serine + H(+) = a 1,2-diacyl-sn-glycero-3-phosphoethanolamine + CO2</text>
        <dbReference type="Rhea" id="RHEA:20828"/>
        <dbReference type="ChEBI" id="CHEBI:15378"/>
        <dbReference type="ChEBI" id="CHEBI:16526"/>
        <dbReference type="ChEBI" id="CHEBI:57262"/>
        <dbReference type="ChEBI" id="CHEBI:64612"/>
        <dbReference type="EC" id="4.1.1.65"/>
    </reaction>
</comment>
<comment type="cofactor">
    <cofactor evidence="1">
        <name>pyruvate</name>
        <dbReference type="ChEBI" id="CHEBI:15361"/>
    </cofactor>
    <text evidence="1">Binds 1 pyruvoyl group covalently per subunit.</text>
</comment>
<comment type="pathway">
    <text evidence="1">Phospholipid metabolism; phosphatidylethanolamine biosynthesis; phosphatidylethanolamine from CDP-diacylglycerol: step 2/2.</text>
</comment>
<comment type="subunit">
    <text evidence="1">Heterodimer of a large membrane-associated beta subunit and a small pyruvoyl-containing alpha subunit.</text>
</comment>
<comment type="subcellular location">
    <subcellularLocation>
        <location evidence="1">Cell membrane</location>
        <topology evidence="1">Peripheral membrane protein</topology>
    </subcellularLocation>
</comment>
<comment type="PTM">
    <text evidence="1">Is synthesized initially as an inactive proenzyme. Formation of the active enzyme involves a self-maturation process in which the active site pyruvoyl group is generated from an internal serine residue via an autocatalytic post-translational modification. Two non-identical subunits are generated from the proenzyme in this reaction, and the pyruvate is formed at the N-terminus of the alpha chain, which is derived from the carboxyl end of the proenzyme. The autoendoproteolytic cleavage occurs by a canonical serine protease mechanism, in which the side chain hydroxyl group of the serine supplies its oxygen atom to form the C-terminus of the beta chain, while the remainder of the serine residue undergoes an oxidative deamination to produce ammonia and the pyruvoyl prosthetic group on the alpha chain. During this reaction, the Ser that is part of the protease active site of the proenzyme becomes the pyruvoyl prosthetic group, which constitutes an essential element of the active site of the mature decarboxylase.</text>
</comment>
<comment type="similarity">
    <text evidence="1">Belongs to the phosphatidylserine decarboxylase family. PSD-B subfamily. Prokaryotic type I sub-subfamily.</text>
</comment>
<sequence length="282" mass="31194">MSDRLAVLPQYLIPKQALTVLAGKLASAKAGGLTTSVIRWFVRRYNVNMTEAANPDIASYKSFNEFFTRPLKDGARPAADADFLCPVDGAISQYGTIDRDQIFQAKGHSYSTTALVGGDRKLAEQFENGSFATLYLSPRDYHRIHMPCDGKLTRMIYVPGALFSVNPTTARGVPGLFARNERVICVFESEFGSFVLTLVGATIVGSMATVWHGTINPPRPGVIREWRYDEQNIRLKKGQEMGRFLLGSTVVMLFPKNTLAFNPDWSPSRAIRMGEQMGSNAN</sequence>
<organism>
    <name type="scientific">Dechloromonas aromatica (strain RCB)</name>
    <dbReference type="NCBI Taxonomy" id="159087"/>
    <lineage>
        <taxon>Bacteria</taxon>
        <taxon>Pseudomonadati</taxon>
        <taxon>Pseudomonadota</taxon>
        <taxon>Betaproteobacteria</taxon>
        <taxon>Rhodocyclales</taxon>
        <taxon>Azonexaceae</taxon>
        <taxon>Dechloromonas</taxon>
    </lineage>
</organism>
<reference key="1">
    <citation type="journal article" date="2009" name="BMC Genomics">
        <title>Metabolic analysis of the soil microbe Dechloromonas aromatica str. RCB: indications of a surprisingly complex life-style and cryptic anaerobic pathways for aromatic degradation.</title>
        <authorList>
            <person name="Salinero K.K."/>
            <person name="Keller K."/>
            <person name="Feil W.S."/>
            <person name="Feil H."/>
            <person name="Trong S."/>
            <person name="Di Bartolo G."/>
            <person name="Lapidus A."/>
        </authorList>
    </citation>
    <scope>NUCLEOTIDE SEQUENCE [LARGE SCALE GENOMIC DNA]</scope>
    <source>
        <strain>RCB</strain>
    </source>
</reference>
<gene>
    <name evidence="1" type="primary">psd</name>
    <name type="ordered locus">Daro_2876</name>
</gene>